<keyword id="KW-0067">ATP-binding</keyword>
<keyword id="KW-1003">Cell membrane</keyword>
<keyword id="KW-0418">Kinase</keyword>
<keyword id="KW-0449">Lipoprotein</keyword>
<keyword id="KW-0472">Membrane</keyword>
<keyword id="KW-0547">Nucleotide-binding</keyword>
<keyword id="KW-0564">Palmitate</keyword>
<keyword id="KW-0597">Phosphoprotein</keyword>
<keyword id="KW-0611">Plant defense</keyword>
<keyword id="KW-1185">Reference proteome</keyword>
<keyword id="KW-0723">Serine/threonine-protein kinase</keyword>
<keyword id="KW-0808">Transferase</keyword>
<feature type="chain" id="PRO_0000438614" description="Probable serine/threonine-protein kinase PBL22">
    <location>
        <begin position="1"/>
        <end position="381"/>
    </location>
</feature>
<feature type="domain" description="Protein kinase" evidence="3">
    <location>
        <begin position="75"/>
        <end position="351"/>
    </location>
</feature>
<feature type="region of interest" description="Disordered" evidence="4">
    <location>
        <begin position="361"/>
        <end position="381"/>
    </location>
</feature>
<feature type="active site" description="Proton acceptor" evidence="3">
    <location>
        <position position="201"/>
    </location>
</feature>
<feature type="binding site" evidence="3">
    <location>
        <begin position="81"/>
        <end position="89"/>
    </location>
    <ligand>
        <name>ATP</name>
        <dbReference type="ChEBI" id="CHEBI:30616"/>
    </ligand>
</feature>
<feature type="binding site" evidence="3">
    <location>
        <position position="103"/>
    </location>
    <ligand>
        <name>ATP</name>
        <dbReference type="ChEBI" id="CHEBI:30616"/>
    </ligand>
</feature>
<feature type="modified residue" description="Phosphothreonine" evidence="1">
    <location>
        <position position="64"/>
    </location>
</feature>
<feature type="modified residue" description="Phosphotyrosine" evidence="1">
    <location>
        <position position="148"/>
    </location>
</feature>
<feature type="modified residue" description="Phosphoserine" evidence="1">
    <location>
        <position position="235"/>
    </location>
</feature>
<feature type="modified residue" description="Phosphothreonine" evidence="1">
    <location>
        <position position="236"/>
    </location>
</feature>
<feature type="modified residue" description="Phosphothreonine" evidence="1">
    <location>
        <position position="241"/>
    </location>
</feature>
<feature type="modified residue" description="Phosphotyrosine" evidence="1">
    <location>
        <position position="249"/>
    </location>
</feature>
<feature type="lipid moiety-binding region" description="S-palmitoyl cysteine" evidence="2">
    <location>
        <position position="3"/>
    </location>
</feature>
<protein>
    <recommendedName>
        <fullName evidence="6">Probable serine/threonine-protein kinase PBL22</fullName>
        <ecNumber evidence="6">2.7.11.1</ecNumber>
    </recommendedName>
    <alternativeName>
        <fullName evidence="5">PBS1-like protein 22</fullName>
    </alternativeName>
</protein>
<organism>
    <name type="scientific">Arabidopsis thaliana</name>
    <name type="common">Mouse-ear cress</name>
    <dbReference type="NCBI Taxonomy" id="3702"/>
    <lineage>
        <taxon>Eukaryota</taxon>
        <taxon>Viridiplantae</taxon>
        <taxon>Streptophyta</taxon>
        <taxon>Embryophyta</taxon>
        <taxon>Tracheophyta</taxon>
        <taxon>Spermatophyta</taxon>
        <taxon>Magnoliopsida</taxon>
        <taxon>eudicotyledons</taxon>
        <taxon>Gunneridae</taxon>
        <taxon>Pentapetalae</taxon>
        <taxon>rosids</taxon>
        <taxon>malvids</taxon>
        <taxon>Brassicales</taxon>
        <taxon>Brassicaceae</taxon>
        <taxon>Camelineae</taxon>
        <taxon>Arabidopsis</taxon>
    </lineage>
</organism>
<gene>
    <name evidence="5" type="primary">PBL22</name>
    <name evidence="7" type="ordered locus">At1g76370</name>
    <name evidence="8" type="ORF">F15M4.13</name>
</gene>
<proteinExistence type="evidence at transcript level"/>
<sequence>MRCFSCLNTQTNDMRINIDTLSDLTDYASVATKIDPRGTGSKSGILVNGKVNSPKPGGGARSFTFKELAAATKNFREGNIIGKGGFGSVYKGRLDSGQVVAIKQLNPDGHQGNQEFIVEVCMLSVFHHPNLVTLIGYCTSGAQRLLVYEYMPMGSLEDHLFDLEPDQTPLSWYTRMKIAVGAARGIEYLHCKISPSVIYRDLKSANILLDKEFSVKLSDFGLAKVGPVGNRTHVSTRVMGTYGYCAPEYAMSGRLTIKSDIYSFGVVLLELISGRKAIDLSKPNGEQYLVAWARPYLKDPKKFGLLVDPLLRGKFSKRCLNYAISITEMCLNDEANHRPKIGDVVVAFEYIASQSKSYEDRRTARKSTDSNRLRRETKQSY</sequence>
<accession>Q9SFX0</accession>
<accession>Q84WC3</accession>
<name>PBL22_ARATH</name>
<evidence type="ECO:0000250" key="1">
    <source>
        <dbReference type="UniProtKB" id="O48814"/>
    </source>
</evidence>
<evidence type="ECO:0000250" key="2">
    <source>
        <dbReference type="UniProtKB" id="Q9FE20"/>
    </source>
</evidence>
<evidence type="ECO:0000255" key="3">
    <source>
        <dbReference type="PROSITE-ProRule" id="PRU00159"/>
    </source>
</evidence>
<evidence type="ECO:0000256" key="4">
    <source>
        <dbReference type="SAM" id="MobiDB-lite"/>
    </source>
</evidence>
<evidence type="ECO:0000303" key="5">
    <source>
    </source>
</evidence>
<evidence type="ECO:0000305" key="6"/>
<evidence type="ECO:0000312" key="7">
    <source>
        <dbReference type="Araport" id="AT1G76370"/>
    </source>
</evidence>
<evidence type="ECO:0000312" key="8">
    <source>
        <dbReference type="EMBL" id="AAF16664.1"/>
    </source>
</evidence>
<dbReference type="EC" id="2.7.11.1" evidence="6"/>
<dbReference type="EMBL" id="AC012394">
    <property type="protein sequence ID" value="AAF16664.1"/>
    <property type="molecule type" value="Genomic_DNA"/>
</dbReference>
<dbReference type="EMBL" id="CP002684">
    <property type="protein sequence ID" value="AEE35829.1"/>
    <property type="molecule type" value="Genomic_DNA"/>
</dbReference>
<dbReference type="EMBL" id="BT003995">
    <property type="protein sequence ID" value="AAO42034.1"/>
    <property type="molecule type" value="mRNA"/>
</dbReference>
<dbReference type="PIR" id="C96791">
    <property type="entry name" value="C96791"/>
</dbReference>
<dbReference type="RefSeq" id="NP_177763.1">
    <property type="nucleotide sequence ID" value="NM_106286.4"/>
</dbReference>
<dbReference type="SMR" id="Q9SFX0"/>
<dbReference type="FunCoup" id="Q9SFX0">
    <property type="interactions" value="694"/>
</dbReference>
<dbReference type="STRING" id="3702.Q9SFX0"/>
<dbReference type="PaxDb" id="3702-AT1G76370.1"/>
<dbReference type="ProteomicsDB" id="236436"/>
<dbReference type="EnsemblPlants" id="AT1G76370.1">
    <property type="protein sequence ID" value="AT1G76370.1"/>
    <property type="gene ID" value="AT1G76370"/>
</dbReference>
<dbReference type="GeneID" id="843969"/>
<dbReference type="Gramene" id="AT1G76370.1">
    <property type="protein sequence ID" value="AT1G76370.1"/>
    <property type="gene ID" value="AT1G76370"/>
</dbReference>
<dbReference type="KEGG" id="ath:AT1G76370"/>
<dbReference type="Araport" id="AT1G76370"/>
<dbReference type="TAIR" id="AT1G76370">
    <property type="gene designation" value="PBL22"/>
</dbReference>
<dbReference type="eggNOG" id="KOG1187">
    <property type="taxonomic scope" value="Eukaryota"/>
</dbReference>
<dbReference type="HOGENOM" id="CLU_000288_21_4_1"/>
<dbReference type="InParanoid" id="Q9SFX0"/>
<dbReference type="OMA" id="MLSVFHH"/>
<dbReference type="OrthoDB" id="4062651at2759"/>
<dbReference type="PhylomeDB" id="Q9SFX0"/>
<dbReference type="PRO" id="PR:Q9SFX0"/>
<dbReference type="Proteomes" id="UP000006548">
    <property type="component" value="Chromosome 1"/>
</dbReference>
<dbReference type="ExpressionAtlas" id="Q9SFX0">
    <property type="expression patterns" value="baseline and differential"/>
</dbReference>
<dbReference type="GO" id="GO:0009941">
    <property type="term" value="C:chloroplast envelope"/>
    <property type="evidence" value="ECO:0007005"/>
    <property type="project" value="TAIR"/>
</dbReference>
<dbReference type="GO" id="GO:0005886">
    <property type="term" value="C:plasma membrane"/>
    <property type="evidence" value="ECO:0007669"/>
    <property type="project" value="UniProtKB-SubCell"/>
</dbReference>
<dbReference type="GO" id="GO:0005524">
    <property type="term" value="F:ATP binding"/>
    <property type="evidence" value="ECO:0007669"/>
    <property type="project" value="UniProtKB-KW"/>
</dbReference>
<dbReference type="GO" id="GO:0106310">
    <property type="term" value="F:protein serine kinase activity"/>
    <property type="evidence" value="ECO:0007669"/>
    <property type="project" value="RHEA"/>
</dbReference>
<dbReference type="GO" id="GO:0004674">
    <property type="term" value="F:protein serine/threonine kinase activity"/>
    <property type="evidence" value="ECO:0007669"/>
    <property type="project" value="UniProtKB-KW"/>
</dbReference>
<dbReference type="GO" id="GO:0006952">
    <property type="term" value="P:defense response"/>
    <property type="evidence" value="ECO:0007669"/>
    <property type="project" value="UniProtKB-KW"/>
</dbReference>
<dbReference type="CDD" id="cd14066">
    <property type="entry name" value="STKc_IRAK"/>
    <property type="match status" value="1"/>
</dbReference>
<dbReference type="FunFam" id="3.30.200.20:FF:000266">
    <property type="entry name" value="probable serine/threonine-protein kinase RLCKVII"/>
    <property type="match status" value="1"/>
</dbReference>
<dbReference type="FunFam" id="1.10.510.10:FF:000032">
    <property type="entry name" value="Serine/threonine-protein kinase PBS1"/>
    <property type="match status" value="1"/>
</dbReference>
<dbReference type="Gene3D" id="3.30.200.20">
    <property type="entry name" value="Phosphorylase Kinase, domain 1"/>
    <property type="match status" value="1"/>
</dbReference>
<dbReference type="Gene3D" id="1.10.510.10">
    <property type="entry name" value="Transferase(Phosphotransferase) domain 1"/>
    <property type="match status" value="1"/>
</dbReference>
<dbReference type="InterPro" id="IPR011009">
    <property type="entry name" value="Kinase-like_dom_sf"/>
</dbReference>
<dbReference type="InterPro" id="IPR000719">
    <property type="entry name" value="Prot_kinase_dom"/>
</dbReference>
<dbReference type="InterPro" id="IPR017441">
    <property type="entry name" value="Protein_kinase_ATP_BS"/>
</dbReference>
<dbReference type="InterPro" id="IPR008271">
    <property type="entry name" value="Ser/Thr_kinase_AS"/>
</dbReference>
<dbReference type="PANTHER" id="PTHR47985">
    <property type="entry name" value="OS07G0668900 PROTEIN"/>
    <property type="match status" value="1"/>
</dbReference>
<dbReference type="PANTHER" id="PTHR47985:SF45">
    <property type="entry name" value="SERINE_THREONINE-PROTEIN KINASE PBL22-RELATED"/>
    <property type="match status" value="1"/>
</dbReference>
<dbReference type="Pfam" id="PF00069">
    <property type="entry name" value="Pkinase"/>
    <property type="match status" value="1"/>
</dbReference>
<dbReference type="PIRSF" id="PIRSF000654">
    <property type="entry name" value="Integrin-linked_kinase"/>
    <property type="match status" value="1"/>
</dbReference>
<dbReference type="SMART" id="SM00220">
    <property type="entry name" value="S_TKc"/>
    <property type="match status" value="1"/>
</dbReference>
<dbReference type="SUPFAM" id="SSF56112">
    <property type="entry name" value="Protein kinase-like (PK-like)"/>
    <property type="match status" value="1"/>
</dbReference>
<dbReference type="PROSITE" id="PS00107">
    <property type="entry name" value="PROTEIN_KINASE_ATP"/>
    <property type="match status" value="1"/>
</dbReference>
<dbReference type="PROSITE" id="PS50011">
    <property type="entry name" value="PROTEIN_KINASE_DOM"/>
    <property type="match status" value="1"/>
</dbReference>
<dbReference type="PROSITE" id="PS00108">
    <property type="entry name" value="PROTEIN_KINASE_ST"/>
    <property type="match status" value="1"/>
</dbReference>
<reference key="1">
    <citation type="journal article" date="2000" name="Nature">
        <title>Sequence and analysis of chromosome 1 of the plant Arabidopsis thaliana.</title>
        <authorList>
            <person name="Theologis A."/>
            <person name="Ecker J.R."/>
            <person name="Palm C.J."/>
            <person name="Federspiel N.A."/>
            <person name="Kaul S."/>
            <person name="White O."/>
            <person name="Alonso J."/>
            <person name="Altafi H."/>
            <person name="Araujo R."/>
            <person name="Bowman C.L."/>
            <person name="Brooks S.Y."/>
            <person name="Buehler E."/>
            <person name="Chan A."/>
            <person name="Chao Q."/>
            <person name="Chen H."/>
            <person name="Cheuk R.F."/>
            <person name="Chin C.W."/>
            <person name="Chung M.K."/>
            <person name="Conn L."/>
            <person name="Conway A.B."/>
            <person name="Conway A.R."/>
            <person name="Creasy T.H."/>
            <person name="Dewar K."/>
            <person name="Dunn P."/>
            <person name="Etgu P."/>
            <person name="Feldblyum T.V."/>
            <person name="Feng J.-D."/>
            <person name="Fong B."/>
            <person name="Fujii C.Y."/>
            <person name="Gill J.E."/>
            <person name="Goldsmith A.D."/>
            <person name="Haas B."/>
            <person name="Hansen N.F."/>
            <person name="Hughes B."/>
            <person name="Huizar L."/>
            <person name="Hunter J.L."/>
            <person name="Jenkins J."/>
            <person name="Johnson-Hopson C."/>
            <person name="Khan S."/>
            <person name="Khaykin E."/>
            <person name="Kim C.J."/>
            <person name="Koo H.L."/>
            <person name="Kremenetskaia I."/>
            <person name="Kurtz D.B."/>
            <person name="Kwan A."/>
            <person name="Lam B."/>
            <person name="Langin-Hooper S."/>
            <person name="Lee A."/>
            <person name="Lee J.M."/>
            <person name="Lenz C.A."/>
            <person name="Li J.H."/>
            <person name="Li Y.-P."/>
            <person name="Lin X."/>
            <person name="Liu S.X."/>
            <person name="Liu Z.A."/>
            <person name="Luros J.S."/>
            <person name="Maiti R."/>
            <person name="Marziali A."/>
            <person name="Militscher J."/>
            <person name="Miranda M."/>
            <person name="Nguyen M."/>
            <person name="Nierman W.C."/>
            <person name="Osborne B.I."/>
            <person name="Pai G."/>
            <person name="Peterson J."/>
            <person name="Pham P.K."/>
            <person name="Rizzo M."/>
            <person name="Rooney T."/>
            <person name="Rowley D."/>
            <person name="Sakano H."/>
            <person name="Salzberg S.L."/>
            <person name="Schwartz J.R."/>
            <person name="Shinn P."/>
            <person name="Southwick A.M."/>
            <person name="Sun H."/>
            <person name="Tallon L.J."/>
            <person name="Tambunga G."/>
            <person name="Toriumi M.J."/>
            <person name="Town C.D."/>
            <person name="Utterback T."/>
            <person name="Van Aken S."/>
            <person name="Vaysberg M."/>
            <person name="Vysotskaia V.S."/>
            <person name="Walker M."/>
            <person name="Wu D."/>
            <person name="Yu G."/>
            <person name="Fraser C.M."/>
            <person name="Venter J.C."/>
            <person name="Davis R.W."/>
        </authorList>
    </citation>
    <scope>NUCLEOTIDE SEQUENCE [LARGE SCALE GENOMIC DNA]</scope>
    <source>
        <strain>cv. Columbia</strain>
    </source>
</reference>
<reference key="2">
    <citation type="journal article" date="2017" name="Plant J.">
        <title>Araport11: a complete reannotation of the Arabidopsis thaliana reference genome.</title>
        <authorList>
            <person name="Cheng C.Y."/>
            <person name="Krishnakumar V."/>
            <person name="Chan A.P."/>
            <person name="Thibaud-Nissen F."/>
            <person name="Schobel S."/>
            <person name="Town C.D."/>
        </authorList>
    </citation>
    <scope>GENOME REANNOTATION</scope>
    <source>
        <strain>cv. Columbia</strain>
    </source>
</reference>
<reference key="3">
    <citation type="journal article" date="2003" name="Science">
        <title>Empirical analysis of transcriptional activity in the Arabidopsis genome.</title>
        <authorList>
            <person name="Yamada K."/>
            <person name="Lim J."/>
            <person name="Dale J.M."/>
            <person name="Chen H."/>
            <person name="Shinn P."/>
            <person name="Palm C.J."/>
            <person name="Southwick A.M."/>
            <person name="Wu H.C."/>
            <person name="Kim C.J."/>
            <person name="Nguyen M."/>
            <person name="Pham P.K."/>
            <person name="Cheuk R.F."/>
            <person name="Karlin-Newmann G."/>
            <person name="Liu S.X."/>
            <person name="Lam B."/>
            <person name="Sakano H."/>
            <person name="Wu T."/>
            <person name="Yu G."/>
            <person name="Miranda M."/>
            <person name="Quach H.L."/>
            <person name="Tripp M."/>
            <person name="Chang C.H."/>
            <person name="Lee J.M."/>
            <person name="Toriumi M.J."/>
            <person name="Chan M.M."/>
            <person name="Tang C.C."/>
            <person name="Onodera C.S."/>
            <person name="Deng J.M."/>
            <person name="Akiyama K."/>
            <person name="Ansari Y."/>
            <person name="Arakawa T."/>
            <person name="Banh J."/>
            <person name="Banno F."/>
            <person name="Bowser L."/>
            <person name="Brooks S.Y."/>
            <person name="Carninci P."/>
            <person name="Chao Q."/>
            <person name="Choy N."/>
            <person name="Enju A."/>
            <person name="Goldsmith A.D."/>
            <person name="Gurjal M."/>
            <person name="Hansen N.F."/>
            <person name="Hayashizaki Y."/>
            <person name="Johnson-Hopson C."/>
            <person name="Hsuan V.W."/>
            <person name="Iida K."/>
            <person name="Karnes M."/>
            <person name="Khan S."/>
            <person name="Koesema E."/>
            <person name="Ishida J."/>
            <person name="Jiang P.X."/>
            <person name="Jones T."/>
            <person name="Kawai J."/>
            <person name="Kamiya A."/>
            <person name="Meyers C."/>
            <person name="Nakajima M."/>
            <person name="Narusaka M."/>
            <person name="Seki M."/>
            <person name="Sakurai T."/>
            <person name="Satou M."/>
            <person name="Tamse R."/>
            <person name="Vaysberg M."/>
            <person name="Wallender E.K."/>
            <person name="Wong C."/>
            <person name="Yamamura Y."/>
            <person name="Yuan S."/>
            <person name="Shinozaki K."/>
            <person name="Davis R.W."/>
            <person name="Theologis A."/>
            <person name="Ecker J.R."/>
        </authorList>
    </citation>
    <scope>NUCLEOTIDE SEQUENCE [LARGE SCALE MRNA] OF 285-381</scope>
    <source>
        <strain>cv. Columbia</strain>
    </source>
</reference>
<reference key="4">
    <citation type="journal article" date="2010" name="Cell Host Microbe">
        <title>Receptor-like cytoplasmic kinases integrate signaling from multiple plant immune receptors and are targeted by a Pseudomonas syringae effector.</title>
        <authorList>
            <person name="Zhang J."/>
            <person name="Li W."/>
            <person name="Xiang T."/>
            <person name="Liu Z."/>
            <person name="Laluk K."/>
            <person name="Ding X."/>
            <person name="Zou Y."/>
            <person name="Gao M."/>
            <person name="Zhang X."/>
            <person name="Chen S."/>
            <person name="Mengiste T."/>
            <person name="Zhang Y."/>
            <person name="Zhou J.M."/>
        </authorList>
    </citation>
    <scope>GENE FAMILY</scope>
    <scope>NOMENCLATURE</scope>
</reference>
<comment type="function">
    <text evidence="1">May be involved in plant defense signaling.</text>
</comment>
<comment type="catalytic activity">
    <reaction evidence="6">
        <text>L-seryl-[protein] + ATP = O-phospho-L-seryl-[protein] + ADP + H(+)</text>
        <dbReference type="Rhea" id="RHEA:17989"/>
        <dbReference type="Rhea" id="RHEA-COMP:9863"/>
        <dbReference type="Rhea" id="RHEA-COMP:11604"/>
        <dbReference type="ChEBI" id="CHEBI:15378"/>
        <dbReference type="ChEBI" id="CHEBI:29999"/>
        <dbReference type="ChEBI" id="CHEBI:30616"/>
        <dbReference type="ChEBI" id="CHEBI:83421"/>
        <dbReference type="ChEBI" id="CHEBI:456216"/>
        <dbReference type="EC" id="2.7.11.1"/>
    </reaction>
</comment>
<comment type="catalytic activity">
    <reaction evidence="6">
        <text>L-threonyl-[protein] + ATP = O-phospho-L-threonyl-[protein] + ADP + H(+)</text>
        <dbReference type="Rhea" id="RHEA:46608"/>
        <dbReference type="Rhea" id="RHEA-COMP:11060"/>
        <dbReference type="Rhea" id="RHEA-COMP:11605"/>
        <dbReference type="ChEBI" id="CHEBI:15378"/>
        <dbReference type="ChEBI" id="CHEBI:30013"/>
        <dbReference type="ChEBI" id="CHEBI:30616"/>
        <dbReference type="ChEBI" id="CHEBI:61977"/>
        <dbReference type="ChEBI" id="CHEBI:456216"/>
        <dbReference type="EC" id="2.7.11.1"/>
    </reaction>
</comment>
<comment type="subcellular location">
    <subcellularLocation>
        <location evidence="1">Cell membrane</location>
        <topology evidence="1">Lipid-anchor</topology>
    </subcellularLocation>
</comment>
<comment type="PTM">
    <text evidence="2">Palmitoylation at Cys-3 and Cys-6 are required for plasma membrane location.</text>
</comment>
<comment type="similarity">
    <text evidence="3">Belongs to the protein kinase superfamily. Ser/Thr protein kinase family.</text>
</comment>